<organism>
    <name type="scientific">Grammostola rosea</name>
    <name type="common">Chilean rose tarantula</name>
    <name type="synonym">Grammostola spatulata</name>
    <dbReference type="NCBI Taxonomy" id="432528"/>
    <lineage>
        <taxon>Eukaryota</taxon>
        <taxon>Metazoa</taxon>
        <taxon>Ecdysozoa</taxon>
        <taxon>Arthropoda</taxon>
        <taxon>Chelicerata</taxon>
        <taxon>Arachnida</taxon>
        <taxon>Araneae</taxon>
        <taxon>Mygalomorphae</taxon>
        <taxon>Theraphosidae</taxon>
        <taxon>Grammostola</taxon>
    </lineage>
</organism>
<proteinExistence type="evidence at protein level"/>
<accession>P85117</accession>
<dbReference type="SMR" id="P85117"/>
<dbReference type="ArachnoServer" id="AS000223">
    <property type="toxin name" value="beta-theraphotoxin-Gr1a"/>
</dbReference>
<dbReference type="GO" id="GO:0005576">
    <property type="term" value="C:extracellular region"/>
    <property type="evidence" value="ECO:0007669"/>
    <property type="project" value="UniProtKB-SubCell"/>
</dbReference>
<dbReference type="GO" id="GO:0015459">
    <property type="term" value="F:potassium channel regulator activity"/>
    <property type="evidence" value="ECO:0007669"/>
    <property type="project" value="UniProtKB-KW"/>
</dbReference>
<dbReference type="GO" id="GO:0017080">
    <property type="term" value="F:sodium channel regulator activity"/>
    <property type="evidence" value="ECO:0007669"/>
    <property type="project" value="UniProtKB-KW"/>
</dbReference>
<dbReference type="GO" id="GO:0090729">
    <property type="term" value="F:toxin activity"/>
    <property type="evidence" value="ECO:0007669"/>
    <property type="project" value="UniProtKB-KW"/>
</dbReference>
<dbReference type="SUPFAM" id="SSF57059">
    <property type="entry name" value="omega toxin-like"/>
    <property type="match status" value="1"/>
</dbReference>
<protein>
    <recommendedName>
        <fullName evidence="8">Beta-theraphotoxin-Gr1a</fullName>
        <shortName evidence="8">Beta-TRTX-Gr1a</shortName>
    </recommendedName>
    <alternativeName>
        <fullName evidence="7">GrTx1</fullName>
    </alternativeName>
</protein>
<keyword id="KW-0903">Direct protein sequencing</keyword>
<keyword id="KW-1015">Disulfide bond</keyword>
<keyword id="KW-0872">Ion channel impairing toxin</keyword>
<keyword id="KW-0960">Knottin</keyword>
<keyword id="KW-0528">Neurotoxin</keyword>
<keyword id="KW-0632">Potassium channel impairing toxin</keyword>
<keyword id="KW-0964">Secreted</keyword>
<keyword id="KW-0800">Toxin</keyword>
<keyword id="KW-1220">Voltage-gated potassium channel impairing toxin</keyword>
<keyword id="KW-0738">Voltage-gated sodium channel impairing toxin</keyword>
<name>TX1_GRARO</name>
<reference key="1">
    <citation type="journal article" date="2007" name="Toxicon">
        <title>Isolation and characterization of a novel toxin from the venom of the spider Grammostola rosea that blocks sodium channels.</title>
        <authorList>
            <person name="Clement H."/>
            <person name="Odell G."/>
            <person name="Zamudio F.Z."/>
            <person name="Redaelli E."/>
            <person name="Wanke E."/>
            <person name="Alagon A."/>
            <person name="Possani L.D."/>
        </authorList>
    </citation>
    <scope>PROTEIN SEQUENCE</scope>
    <scope>FUNCTION</scope>
    <scope>SUBCELLULAR LOCATION</scope>
    <scope>MASS SPECTROMETRY</scope>
    <source>
        <tissue>Venom</tissue>
    </source>
</reference>
<reference key="2">
    <citation type="journal article" date="2010" name="J. Biol. Chem.">
        <title>Target promiscuity and heterogeneous effects of tarantula venom peptides affecting Na+ and K+ ion channels.</title>
        <authorList>
            <person name="Redaelli E."/>
            <person name="Cassulini R.R."/>
            <person name="Silva D.F."/>
            <person name="Clement H."/>
            <person name="Schiavon E."/>
            <person name="Zamudio F.Z."/>
            <person name="Odell G."/>
            <person name="Arcangeli A."/>
            <person name="Clare J.J."/>
            <person name="Alagon A."/>
            <person name="de la Vega R.C."/>
            <person name="Possani L.D."/>
            <person name="Wanke E."/>
        </authorList>
    </citation>
    <scope>FUNCTION</scope>
</reference>
<reference key="3">
    <citation type="journal article" date="2010" name="J. Biol. Chem.">
        <authorList>
            <person name="Redaelli E."/>
            <person name="Cassulini R.R."/>
            <person name="Silva D.F."/>
            <person name="Clement H."/>
            <person name="Schiavon E."/>
            <person name="Zamudio F.Z."/>
            <person name="Odell G."/>
            <person name="Arcangeli A."/>
            <person name="Clare J.J."/>
            <person name="Alagon A."/>
            <person name="de la Vega R.C."/>
            <person name="Possani L.D."/>
            <person name="Wanke E."/>
        </authorList>
    </citation>
    <scope>ERRATUM OF PUBMED:19955179</scope>
</reference>
<reference key="4">
    <citation type="journal article" date="2019" name="Cell">
        <title>Structural basis of Nav1.7 inhibition by a gating-modifier spider toxin.</title>
        <authorList>
            <person name="Xu H."/>
            <person name="Li T."/>
            <person name="Rohou A."/>
            <person name="Arthur C.P."/>
            <person name="Tzakoniati F."/>
            <person name="Wong E."/>
            <person name="Estevez A."/>
            <person name="Kugel C."/>
            <person name="Franke Y."/>
            <person name="Chen J."/>
            <person name="Ciferri C."/>
            <person name="Hackos D.H."/>
            <person name="Koth C.M."/>
            <person name="Payandeh J."/>
        </authorList>
    </citation>
    <scope>FUNCTION</scope>
    <scope>MUTAGENESIS OF GLN-22</scope>
</reference>
<reference key="5">
    <citation type="journal article" date="2019" name="Toxins">
        <title>Chemical synthesis, proper folding, Nav channel selectivity profile and analgesic properties of the spider peptide Phlotoxin 1.</title>
        <authorList>
            <person name="Nicolas S."/>
            <person name="Zoukimian C."/>
            <person name="Bosmans F."/>
            <person name="Montnach J."/>
            <person name="Diochot S."/>
            <person name="Cuypers E."/>
            <person name="De Waard S."/>
            <person name="Beroud R."/>
            <person name="Mebs D."/>
            <person name="Craik D."/>
            <person name="Boturyn D."/>
            <person name="Lazdunski M."/>
            <person name="Tytgat J."/>
            <person name="De Waard M."/>
        </authorList>
    </citation>
    <scope>FUNCTION ON NAV1.7/SCN9A</scope>
    <scope>SYNTHESIS</scope>
</reference>
<sequence length="29" mass="3703">YCQKWMWTCDSKRKCCEDMVCQLWCKKRL</sequence>
<feature type="peptide" id="PRO_0000284758" description="Beta-theraphotoxin-Gr1a" evidence="6">
    <location>
        <begin position="1"/>
        <end position="29"/>
    </location>
</feature>
<feature type="disulfide bond" evidence="1">
    <location>
        <begin position="2"/>
        <end position="16"/>
    </location>
</feature>
<feature type="disulfide bond" evidence="1">
    <location>
        <begin position="9"/>
        <end position="21"/>
    </location>
</feature>
<feature type="disulfide bond" evidence="1">
    <location>
        <begin position="15"/>
        <end position="25"/>
    </location>
</feature>
<feature type="mutagenesis site" description="8-fold decrease in inhibitory potency on human Nav1.7/SCN9A." evidence="4">
    <original>Q</original>
    <variation>D</variation>
    <location>
        <position position="22"/>
    </location>
</feature>
<feature type="mutagenesis site" description="9-fold decrease in inhibitory potency on human Nav1.7/SCN9A." evidence="4">
    <original>Q</original>
    <variation>E</variation>
    <location>
        <position position="22"/>
    </location>
</feature>
<feature type="mutagenesis site" description="111-fold increase in inhibitory potency on human Nav1.7/SCN9A." evidence="4">
    <original>Q</original>
    <variation>K</variation>
    <location>
        <position position="22"/>
    </location>
</feature>
<feature type="mutagenesis site" description="100-fold increase in inhibitory potency on human Nav1.7/SCN9A." evidence="4">
    <original>Q</original>
    <variation>R</variation>
    <location>
        <position position="22"/>
    </location>
</feature>
<evidence type="ECO:0000250" key="1">
    <source>
        <dbReference type="UniProtKB" id="P83476"/>
    </source>
</evidence>
<evidence type="ECO:0000269" key="2">
    <source>
    </source>
</evidence>
<evidence type="ECO:0000269" key="3">
    <source>
    </source>
</evidence>
<evidence type="ECO:0000269" key="4">
    <source>
    </source>
</evidence>
<evidence type="ECO:0000269" key="5">
    <source>
    </source>
</evidence>
<evidence type="ECO:0000303" key="6">
    <source>
    </source>
</evidence>
<evidence type="ECO:0000303" key="7">
    <source>
    </source>
</evidence>
<evidence type="ECO:0000305" key="8"/>
<evidence type="ECO:0000305" key="9">
    <source>
    </source>
</evidence>
<comment type="function">
    <text evidence="2 3 4 5">Inhibits voltage-gated sodium channels Nav1.1/SCN1A (IC(50)=630 nM), Nav1.2/SCN2A (IC(50)=230 nM), Nav1.3/SCN3A (IC(50)=770 nM), Nav1.4/SCN4A (IC(50)=1290 nM), Nav1.6/SCN8A (IC(50)=630 nM), Nav1.7/SCN9A (IC(50)=15.3-1000 nM) and potassium channels Kv11.1/KCNH2 (IC(50)=4.2 uM).</text>
</comment>
<comment type="subcellular location">
    <subcellularLocation>
        <location evidence="2">Secreted</location>
    </subcellularLocation>
</comment>
<comment type="tissue specificity">
    <text evidence="9">Expressed by the venom gland.</text>
</comment>
<comment type="domain">
    <text evidence="1">The presence of a 'disulfide through disulfide knot' structurally defines this protein as a knottin.</text>
</comment>
<comment type="mass spectrometry" mass="3697.0" error="1.0" method="Electrospray" evidence="2"/>
<comment type="miscellaneous">
    <text evidence="3">Negative results: does not inhibit sodium channels Nav1.5/SCN5A (IC(50)=22 uM) and potassium channels Kv11.2/KCNH6, Kv11.3/KCNH7, Kv1.1/KCNA1 and Kv1.4/KCNA4 (IC(50)&gt;200 uM).</text>
</comment>
<comment type="similarity">
    <text evidence="8">Belongs to the neurotoxin 30 (phrixotoxin) family.</text>
</comment>